<keyword id="KW-0150">Chloroplast</keyword>
<keyword id="KW-0507">mRNA processing</keyword>
<keyword id="KW-0934">Plastid</keyword>
<keyword id="KW-0694">RNA-binding</keyword>
<keyword id="KW-0819">tRNA processing</keyword>
<reference key="1">
    <citation type="journal article" date="2005" name="Am. J. Bot.">
        <title>Basal cactus phylogeny: implications of Pereskia (Cactaceae) paraphyly for the transition to the cactus life form.</title>
        <authorList>
            <person name="Edwards E.J."/>
            <person name="Nyffeler R."/>
            <person name="Donoghue M.J."/>
        </authorList>
        <dbReference type="AGRICOLA" id="IND43724792"/>
    </citation>
    <scope>NUCLEOTIDE SEQUENCE [GENOMIC DNA]</scope>
</reference>
<protein>
    <recommendedName>
        <fullName evidence="1">Maturase K</fullName>
    </recommendedName>
    <alternativeName>
        <fullName evidence="1">Intron maturase</fullName>
    </alternativeName>
</protein>
<comment type="function">
    <text evidence="1">Usually encoded in the trnK tRNA gene intron. Probably assists in splicing its own and other chloroplast group II introns.</text>
</comment>
<comment type="subcellular location">
    <subcellularLocation>
        <location>Plastid</location>
        <location>Chloroplast</location>
    </subcellularLocation>
</comment>
<comment type="similarity">
    <text evidence="1">Belongs to the intron maturase 2 family. MatK subfamily.</text>
</comment>
<evidence type="ECO:0000255" key="1">
    <source>
        <dbReference type="HAMAP-Rule" id="MF_01390"/>
    </source>
</evidence>
<name>MATK_POROL</name>
<dbReference type="EMBL" id="AY875349">
    <property type="protein sequence ID" value="AAY30993.1"/>
    <property type="molecule type" value="Genomic_DNA"/>
</dbReference>
<dbReference type="RefSeq" id="YP_009441421.1">
    <property type="nucleotide sequence ID" value="NC_036236.1"/>
</dbReference>
<dbReference type="GeneID" id="34927665"/>
<dbReference type="GO" id="GO:0009507">
    <property type="term" value="C:chloroplast"/>
    <property type="evidence" value="ECO:0007669"/>
    <property type="project" value="UniProtKB-SubCell"/>
</dbReference>
<dbReference type="GO" id="GO:0003723">
    <property type="term" value="F:RNA binding"/>
    <property type="evidence" value="ECO:0007669"/>
    <property type="project" value="UniProtKB-KW"/>
</dbReference>
<dbReference type="GO" id="GO:0006397">
    <property type="term" value="P:mRNA processing"/>
    <property type="evidence" value="ECO:0007669"/>
    <property type="project" value="UniProtKB-KW"/>
</dbReference>
<dbReference type="GO" id="GO:0008380">
    <property type="term" value="P:RNA splicing"/>
    <property type="evidence" value="ECO:0007669"/>
    <property type="project" value="UniProtKB-UniRule"/>
</dbReference>
<dbReference type="GO" id="GO:0008033">
    <property type="term" value="P:tRNA processing"/>
    <property type="evidence" value="ECO:0007669"/>
    <property type="project" value="UniProtKB-KW"/>
</dbReference>
<dbReference type="HAMAP" id="MF_01390">
    <property type="entry name" value="MatK"/>
    <property type="match status" value="1"/>
</dbReference>
<dbReference type="InterPro" id="IPR024937">
    <property type="entry name" value="Domain_X"/>
</dbReference>
<dbReference type="InterPro" id="IPR002866">
    <property type="entry name" value="Maturase_MatK"/>
</dbReference>
<dbReference type="InterPro" id="IPR024942">
    <property type="entry name" value="Maturase_MatK_N"/>
</dbReference>
<dbReference type="PANTHER" id="PTHR34811">
    <property type="entry name" value="MATURASE K"/>
    <property type="match status" value="1"/>
</dbReference>
<dbReference type="PANTHER" id="PTHR34811:SF1">
    <property type="entry name" value="MATURASE K"/>
    <property type="match status" value="1"/>
</dbReference>
<dbReference type="Pfam" id="PF01348">
    <property type="entry name" value="Intron_maturas2"/>
    <property type="match status" value="1"/>
</dbReference>
<dbReference type="Pfam" id="PF01824">
    <property type="entry name" value="MatK_N"/>
    <property type="match status" value="1"/>
</dbReference>
<organism>
    <name type="scientific">Portulaca oleracea</name>
    <name type="common">Common purslane</name>
    <name type="synonym">Portulaca neglecta</name>
    <dbReference type="NCBI Taxonomy" id="46147"/>
    <lineage>
        <taxon>Eukaryota</taxon>
        <taxon>Viridiplantae</taxon>
        <taxon>Streptophyta</taxon>
        <taxon>Embryophyta</taxon>
        <taxon>Tracheophyta</taxon>
        <taxon>Spermatophyta</taxon>
        <taxon>Magnoliopsida</taxon>
        <taxon>eudicotyledons</taxon>
        <taxon>Gunneridae</taxon>
        <taxon>Pentapetalae</taxon>
        <taxon>Caryophyllales</taxon>
        <taxon>Cactineae</taxon>
        <taxon>Portulacaceae</taxon>
        <taxon>Portulaca</taxon>
    </lineage>
</organism>
<gene>
    <name evidence="1" type="primary">matK</name>
</gene>
<feature type="chain" id="PRO_0000143645" description="Maturase K">
    <location>
        <begin position="1"/>
        <end position="509"/>
    </location>
</feature>
<sequence>MEEFQRYIELDRSWQHNFFYPLIFQEYIYGFAYDHGLNKSILLENAGDKKYSLLIVKRLITRMYQQNHLILSDKNSNQNDFFGHKHKKNLYYQMISEGFAVIVEIPFSLLLISSLEAKEKKIVKSNNLRSIHSIFPFFEDKFLHLNYALEILIPYPIHLEILVQTLRYWVKDASSLHLLRFFLYEYRNCNSLITPPKSISIFSKSNQRLFLFLYNFHVCEYESLFVFLCNQSSHLRSISFGALLERIYFYGKLEYLVKVKTFTKYLRVILWFFKDPFLHYVRYRGKSILTSKGTSFLMHKWKYYLINFWQSRFSLWSQPRRIYINPLSKHSLDFMGFFSSVRLNSSVVRSQMVENSFLIDNPIKKFDTIVRIIPLVGSLAKAKFCNVLGHPISKSVWTDLLDSDIIDRFGRICRNLSHYYSGSSRKKSLYQIKYILRLSCARTLARKHKSTVRAFLKRLGSEFLEEFFTEEERILSLILPRDSSISRRFYRGPIWYLDIFCIHDLVNDE</sequence>
<geneLocation type="chloroplast"/>
<proteinExistence type="inferred from homology"/>
<accession>Q3MKB9</accession>